<comment type="function">
    <text evidence="4">Salivary protein with anticoagulant activity that inhibits host thrombin (F2).</text>
</comment>
<comment type="subunit">
    <text evidence="1">Interacts with human F2 (thrombin); the interaction results in thrombin inhibition.</text>
</comment>
<comment type="subcellular location">
    <subcellularLocation>
        <location evidence="6">Secreted</location>
    </subcellularLocation>
</comment>
<comment type="similarity">
    <text evidence="6">Belongs to the anophelin family.</text>
</comment>
<proteinExistence type="inferred from homology"/>
<keyword id="KW-1203">Blood coagulation cascade inhibiting toxin</keyword>
<keyword id="KW-0325">Glycoprotein</keyword>
<keyword id="KW-1199">Hemostasis impairing toxin</keyword>
<keyword id="KW-1185">Reference proteome</keyword>
<keyword id="KW-0964">Secreted</keyword>
<keyword id="KW-0732">Signal</keyword>
<keyword id="KW-0800">Toxin</keyword>
<dbReference type="EMBL" id="EU934305">
    <property type="protein sequence ID" value="ACI30083.1"/>
    <property type="molecule type" value="mRNA"/>
</dbReference>
<dbReference type="EMBL" id="EU934308">
    <property type="protein sequence ID" value="ACI30086.1"/>
    <property type="molecule type" value="mRNA"/>
</dbReference>
<dbReference type="RefSeq" id="XP_049533778.1">
    <property type="nucleotide sequence ID" value="XM_049677821.1"/>
</dbReference>
<dbReference type="SMR" id="B6DDU5"/>
<dbReference type="MEROPS" id="I77.001"/>
<dbReference type="GeneID" id="125950143"/>
<dbReference type="VEuPathDB" id="VectorBase:ADAR2_007597"/>
<dbReference type="OrthoDB" id="7737463at2759"/>
<dbReference type="Proteomes" id="UP000000673">
    <property type="component" value="Unplaced"/>
</dbReference>
<dbReference type="GO" id="GO:0005576">
    <property type="term" value="C:extracellular region"/>
    <property type="evidence" value="ECO:0007669"/>
    <property type="project" value="UniProtKB-SubCell"/>
</dbReference>
<dbReference type="GO" id="GO:0090729">
    <property type="term" value="F:toxin activity"/>
    <property type="evidence" value="ECO:0007669"/>
    <property type="project" value="UniProtKB-KW"/>
</dbReference>
<dbReference type="InterPro" id="IPR018932">
    <property type="entry name" value="Thrombin_inhibitor_anophelin"/>
</dbReference>
<dbReference type="Pfam" id="PF10731">
    <property type="entry name" value="Anophelin"/>
    <property type="match status" value="1"/>
</dbReference>
<evidence type="ECO:0000250" key="1">
    <source>
        <dbReference type="UniProtKB" id="Q9NJS1"/>
    </source>
</evidence>
<evidence type="ECO:0000255" key="2"/>
<evidence type="ECO:0000255" key="3">
    <source>
        <dbReference type="PROSITE-ProRule" id="PRU00498"/>
    </source>
</evidence>
<evidence type="ECO:0000269" key="4">
    <source>
    </source>
</evidence>
<evidence type="ECO:0000303" key="5">
    <source>
    </source>
</evidence>
<evidence type="ECO:0000305" key="6"/>
<evidence type="ECO:0000312" key="7">
    <source>
        <dbReference type="EMBL" id="ACI30083.1"/>
    </source>
</evidence>
<evidence type="ECO:0000312" key="8">
    <source>
        <dbReference type="EMBL" id="ACI30086.1"/>
    </source>
</evidence>
<feature type="signal peptide" evidence="2">
    <location>
        <begin position="1"/>
        <end position="22"/>
    </location>
</feature>
<feature type="chain" id="PRO_5002841867" description="Salivary thrombin inhibitor anophelin" evidence="2">
    <location>
        <begin position="23"/>
        <end position="81"/>
    </location>
</feature>
<feature type="region of interest" description="Blocks active site cleft of host thrombin in a reverse direction compared to substrates" evidence="1">
    <location>
        <begin position="70"/>
        <end position="73"/>
    </location>
</feature>
<feature type="glycosylation site" description="N-linked (GlcNAc...) asparagine" evidence="3">
    <location>
        <position position="45"/>
    </location>
</feature>
<feature type="sequence conflict" description="In Ref. 1; ACI30086." evidence="6" ref="1">
    <original>V</original>
    <variation>A</variation>
    <location>
        <position position="14"/>
    </location>
</feature>
<reference evidence="7 8" key="1">
    <citation type="journal article" date="2009" name="BMC Genomics">
        <title>The salivary gland transcriptome of the neotropical malaria vector Anopheles darlingi reveals accelerated evolution of genes relevant to hematophagy.</title>
        <authorList>
            <person name="Calvo E."/>
            <person name="Pham V.M."/>
            <person name="Marinotti O."/>
            <person name="Andersen J.F."/>
            <person name="Ribeiro J.M.C."/>
        </authorList>
    </citation>
    <scope>NUCLEOTIDE SEQUENCE [LARGE SCALE MRNA]</scope>
    <source>
        <tissue evidence="7 8">Salivary gland</tissue>
    </source>
</reference>
<reference evidence="6" key="2">
    <citation type="journal article" date="2012" name="Proc. Natl. Acad. Sci. U.S.A.">
        <title>Unique thrombin inhibition mechanism by anophelin, an anticoagulant from the malaria vector.</title>
        <authorList>
            <person name="Figueiredo A.C."/>
            <person name="de Sanctis D."/>
            <person name="Gutierrez-Gallego R."/>
            <person name="Cereija T.B."/>
            <person name="Macedo-Ribeiro S."/>
            <person name="Fuentes-Prior P."/>
            <person name="Pereira P.J."/>
        </authorList>
    </citation>
    <scope>FUNCTION</scope>
</reference>
<name>SATPA_ANODA</name>
<organism evidence="7">
    <name type="scientific">Anopheles darlingi</name>
    <name type="common">Mosquito</name>
    <dbReference type="NCBI Taxonomy" id="43151"/>
    <lineage>
        <taxon>Eukaryota</taxon>
        <taxon>Metazoa</taxon>
        <taxon>Ecdysozoa</taxon>
        <taxon>Arthropoda</taxon>
        <taxon>Hexapoda</taxon>
        <taxon>Insecta</taxon>
        <taxon>Pterygota</taxon>
        <taxon>Neoptera</taxon>
        <taxon>Endopterygota</taxon>
        <taxon>Diptera</taxon>
        <taxon>Nematocera</taxon>
        <taxon>Culicoidea</taxon>
        <taxon>Culicidae</taxon>
        <taxon>Anophelinae</taxon>
        <taxon>Anopheles</taxon>
    </lineage>
</organism>
<protein>
    <recommendedName>
        <fullName evidence="6">Salivary thrombin inhibitor anophelin</fullName>
    </recommendedName>
    <alternativeName>
        <fullName evidence="5">Anophelin antithrombin</fullName>
    </alternativeName>
</protein>
<accession>B6DDU5</accession>
<accession>B6DDU8</accession>
<sequence length="81" mass="8717">MANKLFLISLLCVVLVAKIAQAAPQYAPGEEPSYDEDTDDKLIENDTSITDEDYAEIEASLSQAFGTAADPGRRLGEGKKP</sequence>